<accession>O74981</accession>
<comment type="function">
    <text evidence="1">Has a role in meiosis.</text>
</comment>
<comment type="subcellular location">
    <subcellularLocation>
        <location evidence="2">Golgi apparatus</location>
    </subcellularLocation>
</comment>
<gene>
    <name type="primary">mug112</name>
    <name type="ORF">SPCC338.02</name>
</gene>
<keyword id="KW-0333">Golgi apparatus</keyword>
<keyword id="KW-0469">Meiosis</keyword>
<keyword id="KW-1185">Reference proteome</keyword>
<name>MU112_SCHPO</name>
<sequence length="125" mass="14175">MEVQKIWKSFLNAISKVFSKGKKLRCTCFPKRKKEASERSCFPFLDTETISSCDLSDDVLSPKLFAKNSYRCSLKETKCIDVIVSHNSLAPQFTEIRYTDGISAKAENTDEMTMHIALAPLTENQ</sequence>
<dbReference type="EMBL" id="CU329672">
    <property type="protein sequence ID" value="CAA19334.1"/>
    <property type="molecule type" value="Genomic_DNA"/>
</dbReference>
<dbReference type="PIR" id="T41739">
    <property type="entry name" value="T41739"/>
</dbReference>
<dbReference type="RefSeq" id="NP_588164.1">
    <property type="nucleotide sequence ID" value="NM_001023153.1"/>
</dbReference>
<dbReference type="SMR" id="O74981"/>
<dbReference type="BioGRID" id="275391">
    <property type="interactions" value="3"/>
</dbReference>
<dbReference type="STRING" id="284812.O74981"/>
<dbReference type="PaxDb" id="4896-SPCC338.02.1"/>
<dbReference type="EnsemblFungi" id="SPCC338.02.1">
    <property type="protein sequence ID" value="SPCC338.02.1:pep"/>
    <property type="gene ID" value="SPCC338.02"/>
</dbReference>
<dbReference type="GeneID" id="2538810"/>
<dbReference type="KEGG" id="spo:2538810"/>
<dbReference type="PomBase" id="SPCC338.02">
    <property type="gene designation" value="mug112"/>
</dbReference>
<dbReference type="VEuPathDB" id="FungiDB:SPCC338.02"/>
<dbReference type="HOGENOM" id="CLU_1993928_0_0_1"/>
<dbReference type="InParanoid" id="O74981"/>
<dbReference type="PRO" id="PR:O74981"/>
<dbReference type="Proteomes" id="UP000002485">
    <property type="component" value="Chromosome III"/>
</dbReference>
<dbReference type="GO" id="GO:0005794">
    <property type="term" value="C:Golgi apparatus"/>
    <property type="evidence" value="ECO:0007005"/>
    <property type="project" value="PomBase"/>
</dbReference>
<dbReference type="GO" id="GO:0051321">
    <property type="term" value="P:meiotic cell cycle"/>
    <property type="evidence" value="ECO:0007669"/>
    <property type="project" value="UniProtKB-KW"/>
</dbReference>
<feature type="chain" id="PRO_0000116822" description="Meiotically up-regulated gene 112 protein">
    <location>
        <begin position="1"/>
        <end position="125"/>
    </location>
</feature>
<protein>
    <recommendedName>
        <fullName>Meiotically up-regulated gene 112 protein</fullName>
    </recommendedName>
</protein>
<reference key="1">
    <citation type="journal article" date="2002" name="Nature">
        <title>The genome sequence of Schizosaccharomyces pombe.</title>
        <authorList>
            <person name="Wood V."/>
            <person name="Gwilliam R."/>
            <person name="Rajandream M.A."/>
            <person name="Lyne M.H."/>
            <person name="Lyne R."/>
            <person name="Stewart A."/>
            <person name="Sgouros J.G."/>
            <person name="Peat N."/>
            <person name="Hayles J."/>
            <person name="Baker S.G."/>
            <person name="Basham D."/>
            <person name="Bowman S."/>
            <person name="Brooks K."/>
            <person name="Brown D."/>
            <person name="Brown S."/>
            <person name="Chillingworth T."/>
            <person name="Churcher C.M."/>
            <person name="Collins M."/>
            <person name="Connor R."/>
            <person name="Cronin A."/>
            <person name="Davis P."/>
            <person name="Feltwell T."/>
            <person name="Fraser A."/>
            <person name="Gentles S."/>
            <person name="Goble A."/>
            <person name="Hamlin N."/>
            <person name="Harris D.E."/>
            <person name="Hidalgo J."/>
            <person name="Hodgson G."/>
            <person name="Holroyd S."/>
            <person name="Hornsby T."/>
            <person name="Howarth S."/>
            <person name="Huckle E.J."/>
            <person name="Hunt S."/>
            <person name="Jagels K."/>
            <person name="James K.D."/>
            <person name="Jones L."/>
            <person name="Jones M."/>
            <person name="Leather S."/>
            <person name="McDonald S."/>
            <person name="McLean J."/>
            <person name="Mooney P."/>
            <person name="Moule S."/>
            <person name="Mungall K.L."/>
            <person name="Murphy L.D."/>
            <person name="Niblett D."/>
            <person name="Odell C."/>
            <person name="Oliver K."/>
            <person name="O'Neil S."/>
            <person name="Pearson D."/>
            <person name="Quail M.A."/>
            <person name="Rabbinowitsch E."/>
            <person name="Rutherford K.M."/>
            <person name="Rutter S."/>
            <person name="Saunders D."/>
            <person name="Seeger K."/>
            <person name="Sharp S."/>
            <person name="Skelton J."/>
            <person name="Simmonds M.N."/>
            <person name="Squares R."/>
            <person name="Squares S."/>
            <person name="Stevens K."/>
            <person name="Taylor K."/>
            <person name="Taylor R.G."/>
            <person name="Tivey A."/>
            <person name="Walsh S.V."/>
            <person name="Warren T."/>
            <person name="Whitehead S."/>
            <person name="Woodward J.R."/>
            <person name="Volckaert G."/>
            <person name="Aert R."/>
            <person name="Robben J."/>
            <person name="Grymonprez B."/>
            <person name="Weltjens I."/>
            <person name="Vanstreels E."/>
            <person name="Rieger M."/>
            <person name="Schaefer M."/>
            <person name="Mueller-Auer S."/>
            <person name="Gabel C."/>
            <person name="Fuchs M."/>
            <person name="Duesterhoeft A."/>
            <person name="Fritzc C."/>
            <person name="Holzer E."/>
            <person name="Moestl D."/>
            <person name="Hilbert H."/>
            <person name="Borzym K."/>
            <person name="Langer I."/>
            <person name="Beck A."/>
            <person name="Lehrach H."/>
            <person name="Reinhardt R."/>
            <person name="Pohl T.M."/>
            <person name="Eger P."/>
            <person name="Zimmermann W."/>
            <person name="Wedler H."/>
            <person name="Wambutt R."/>
            <person name="Purnelle B."/>
            <person name="Goffeau A."/>
            <person name="Cadieu E."/>
            <person name="Dreano S."/>
            <person name="Gloux S."/>
            <person name="Lelaure V."/>
            <person name="Mottier S."/>
            <person name="Galibert F."/>
            <person name="Aves S.J."/>
            <person name="Xiang Z."/>
            <person name="Hunt C."/>
            <person name="Moore K."/>
            <person name="Hurst S.M."/>
            <person name="Lucas M."/>
            <person name="Rochet M."/>
            <person name="Gaillardin C."/>
            <person name="Tallada V.A."/>
            <person name="Garzon A."/>
            <person name="Thode G."/>
            <person name="Daga R.R."/>
            <person name="Cruzado L."/>
            <person name="Jimenez J."/>
            <person name="Sanchez M."/>
            <person name="del Rey F."/>
            <person name="Benito J."/>
            <person name="Dominguez A."/>
            <person name="Revuelta J.L."/>
            <person name="Moreno S."/>
            <person name="Armstrong J."/>
            <person name="Forsburg S.L."/>
            <person name="Cerutti L."/>
            <person name="Lowe T."/>
            <person name="McCombie W.R."/>
            <person name="Paulsen I."/>
            <person name="Potashkin J."/>
            <person name="Shpakovski G.V."/>
            <person name="Ussery D."/>
            <person name="Barrell B.G."/>
            <person name="Nurse P."/>
        </authorList>
    </citation>
    <scope>NUCLEOTIDE SEQUENCE [LARGE SCALE GENOMIC DNA]</scope>
    <source>
        <strain>972 / ATCC 24843</strain>
    </source>
</reference>
<reference key="2">
    <citation type="journal article" date="2005" name="Curr. Biol.">
        <title>A large-scale screen in S. pombe identifies seven novel genes required for critical meiotic events.</title>
        <authorList>
            <person name="Martin-Castellanos C."/>
            <person name="Blanco M."/>
            <person name="Rozalen A.E."/>
            <person name="Perez-Hidalgo L."/>
            <person name="Garcia A.I."/>
            <person name="Conde F."/>
            <person name="Mata J."/>
            <person name="Ellermeier C."/>
            <person name="Davis L."/>
            <person name="San-Segundo P."/>
            <person name="Smith G.R."/>
            <person name="Moreno S."/>
        </authorList>
    </citation>
    <scope>FUNCTION IN MEIOSIS</scope>
</reference>
<reference key="3">
    <citation type="journal article" date="2006" name="Nat. Biotechnol.">
        <title>ORFeome cloning and global analysis of protein localization in the fission yeast Schizosaccharomyces pombe.</title>
        <authorList>
            <person name="Matsuyama A."/>
            <person name="Arai R."/>
            <person name="Yashiroda Y."/>
            <person name="Shirai A."/>
            <person name="Kamata A."/>
            <person name="Sekido S."/>
            <person name="Kobayashi Y."/>
            <person name="Hashimoto A."/>
            <person name="Hamamoto M."/>
            <person name="Hiraoka Y."/>
            <person name="Horinouchi S."/>
            <person name="Yoshida M."/>
        </authorList>
    </citation>
    <scope>SUBCELLULAR LOCATION [LARGE SCALE ANALYSIS]</scope>
</reference>
<proteinExistence type="evidence at protein level"/>
<organism>
    <name type="scientific">Schizosaccharomyces pombe (strain 972 / ATCC 24843)</name>
    <name type="common">Fission yeast</name>
    <dbReference type="NCBI Taxonomy" id="284812"/>
    <lineage>
        <taxon>Eukaryota</taxon>
        <taxon>Fungi</taxon>
        <taxon>Dikarya</taxon>
        <taxon>Ascomycota</taxon>
        <taxon>Taphrinomycotina</taxon>
        <taxon>Schizosaccharomycetes</taxon>
        <taxon>Schizosaccharomycetales</taxon>
        <taxon>Schizosaccharomycetaceae</taxon>
        <taxon>Schizosaccharomyces</taxon>
    </lineage>
</organism>
<evidence type="ECO:0000269" key="1">
    <source>
    </source>
</evidence>
<evidence type="ECO:0000269" key="2">
    <source>
    </source>
</evidence>